<feature type="signal peptide" evidence="6">
    <location>
        <begin position="1"/>
        <end position="16"/>
    </location>
</feature>
<feature type="chain" id="PRO_0000041415" description="Protein Wnt-2b-A">
    <location>
        <begin position="17"/>
        <end position="351"/>
    </location>
</feature>
<feature type="lipid moiety-binding region" description="O-palmitoleoyl serine; by PORCN" evidence="3">
    <location>
        <position position="203"/>
    </location>
</feature>
<feature type="glycosylation site" description="N-linked (GlcNAc...) asparagine" evidence="6">
    <location>
        <position position="77"/>
    </location>
</feature>
<feature type="disulfide bond" evidence="2">
    <location>
        <begin position="67"/>
        <end position="78"/>
    </location>
</feature>
<feature type="disulfide bond" evidence="2">
    <location>
        <begin position="118"/>
        <end position="126"/>
    </location>
</feature>
<feature type="disulfide bond" evidence="2">
    <location>
        <begin position="128"/>
        <end position="148"/>
    </location>
</feature>
<feature type="disulfide bond" evidence="2">
    <location>
        <begin position="197"/>
        <end position="211"/>
    </location>
</feature>
<feature type="disulfide bond" evidence="2">
    <location>
        <begin position="199"/>
        <end position="206"/>
    </location>
</feature>
<feature type="disulfide bond" evidence="2">
    <location>
        <begin position="269"/>
        <end position="300"/>
    </location>
</feature>
<feature type="disulfide bond" evidence="2">
    <location>
        <begin position="285"/>
        <end position="295"/>
    </location>
</feature>
<feature type="disulfide bond" evidence="2">
    <location>
        <begin position="299"/>
        <end position="339"/>
    </location>
</feature>
<feature type="disulfide bond" evidence="2">
    <location>
        <begin position="315"/>
        <end position="330"/>
    </location>
</feature>
<feature type="disulfide bond" evidence="2">
    <location>
        <begin position="317"/>
        <end position="327"/>
    </location>
</feature>
<feature type="disulfide bond" evidence="2">
    <location>
        <begin position="322"/>
        <end position="323"/>
    </location>
</feature>
<evidence type="ECO:0000250" key="1">
    <source>
        <dbReference type="UniProtKB" id="P27467"/>
    </source>
</evidence>
<evidence type="ECO:0000250" key="2">
    <source>
        <dbReference type="UniProtKB" id="P28026"/>
    </source>
</evidence>
<evidence type="ECO:0000250" key="3">
    <source>
        <dbReference type="UniProtKB" id="P56704"/>
    </source>
</evidence>
<evidence type="ECO:0000250" key="4">
    <source>
        <dbReference type="UniProtKB" id="Q93097"/>
    </source>
</evidence>
<evidence type="ECO:0000250" key="5">
    <source>
        <dbReference type="UniProtKB" id="Q98SN7"/>
    </source>
</evidence>
<evidence type="ECO:0000255" key="6"/>
<evidence type="ECO:0000269" key="7">
    <source>
    </source>
</evidence>
<evidence type="ECO:0000269" key="8">
    <source>
    </source>
</evidence>
<evidence type="ECO:0000303" key="9">
    <source>
    </source>
</evidence>
<evidence type="ECO:0000305" key="10"/>
<proteinExistence type="evidence at transcript level"/>
<comment type="function">
    <text evidence="5">Ligand for members of the frizzled family of seven transmembrane receptors. Functions in the canonical Wnt/beta-catenin signaling pathway.</text>
</comment>
<comment type="subcellular location">
    <subcellularLocation>
        <location evidence="4">Secreted</location>
        <location evidence="4">Extracellular space</location>
        <location evidence="4">Extracellular matrix</location>
    </subcellularLocation>
    <subcellularLocation>
        <location evidence="4">Secreted</location>
    </subcellularLocation>
</comment>
<comment type="tissue specificity">
    <text evidence="7 8">Expressed maternally in both vegetal and animal blastomeres with enrichment in the animal hemisphere. Expressed zygotically near the prosencephalic-mesencephalic boundary of the developing brain in neurula and tailbud stages, and also in non-brain areas at tadpole stages.</text>
</comment>
<comment type="developmental stage">
    <text evidence="7">Expressed both maternally and zygotically. Expression accumulates from stage 17 (neurula stage) onwards.</text>
</comment>
<comment type="PTM">
    <text evidence="1 3">Palmitoleoylation is required for efficient binding to frizzled receptors. Depalmitoleoylation leads to Wnt signaling pathway inhibition.</text>
</comment>
<comment type="similarity">
    <text evidence="10">Belongs to the Wnt family.</text>
</comment>
<comment type="caution">
    <text evidence="10">Originally called wnt-2b by PubMed:9203142. Although PubMed:12084573 renames it as wnt-2, it is considered to be a wnt2b paralog by Xenbase.</text>
</comment>
<protein>
    <recommendedName>
        <fullName>Protein Wnt-2b-A</fullName>
        <shortName>Wnt-2b</shortName>
        <shortName evidence="9">XWnt-2b</shortName>
    </recommendedName>
    <alternativeName>
        <fullName>XWnt-2</fullName>
    </alternativeName>
</protein>
<keyword id="KW-0217">Developmental protein</keyword>
<keyword id="KW-1015">Disulfide bond</keyword>
<keyword id="KW-0272">Extracellular matrix</keyword>
<keyword id="KW-0325">Glycoprotein</keyword>
<keyword id="KW-0449">Lipoprotein</keyword>
<keyword id="KW-1185">Reference proteome</keyword>
<keyword id="KW-0964">Secreted</keyword>
<keyword id="KW-0732">Signal</keyword>
<keyword id="KW-0879">Wnt signaling pathway</keyword>
<organism>
    <name type="scientific">Xenopus laevis</name>
    <name type="common">African clawed frog</name>
    <dbReference type="NCBI Taxonomy" id="8355"/>
    <lineage>
        <taxon>Eukaryota</taxon>
        <taxon>Metazoa</taxon>
        <taxon>Chordata</taxon>
        <taxon>Craniata</taxon>
        <taxon>Vertebrata</taxon>
        <taxon>Euteleostomi</taxon>
        <taxon>Amphibia</taxon>
        <taxon>Batrachia</taxon>
        <taxon>Anura</taxon>
        <taxon>Pipoidea</taxon>
        <taxon>Pipidae</taxon>
        <taxon>Xenopodinae</taxon>
        <taxon>Xenopus</taxon>
        <taxon>Xenopus</taxon>
    </lineage>
</organism>
<dbReference type="EMBL" id="U66288">
    <property type="protein sequence ID" value="AAC60218.1"/>
    <property type="molecule type" value="mRNA"/>
</dbReference>
<dbReference type="RefSeq" id="NP_001079279.1">
    <property type="nucleotide sequence ID" value="NM_001085810.1"/>
</dbReference>
<dbReference type="SMR" id="P87387"/>
<dbReference type="GlyCosmos" id="P87387">
    <property type="glycosylation" value="1 site, No reported glycans"/>
</dbReference>
<dbReference type="GeneID" id="378566"/>
<dbReference type="KEGG" id="xla:378566"/>
<dbReference type="AGR" id="Xenbase:XB-GENE-960151"/>
<dbReference type="CTD" id="378566"/>
<dbReference type="Xenbase" id="XB-GENE-960151">
    <property type="gene designation" value="wnt2b.L"/>
</dbReference>
<dbReference type="OrthoDB" id="5945655at2759"/>
<dbReference type="Proteomes" id="UP000186698">
    <property type="component" value="Chromosome 2L"/>
</dbReference>
<dbReference type="Bgee" id="378566">
    <property type="expression patterns" value="Expressed in lung and 12 other cell types or tissues"/>
</dbReference>
<dbReference type="GO" id="GO:0005615">
    <property type="term" value="C:extracellular space"/>
    <property type="evidence" value="ECO:0000318"/>
    <property type="project" value="GO_Central"/>
</dbReference>
<dbReference type="GO" id="GO:0005125">
    <property type="term" value="F:cytokine activity"/>
    <property type="evidence" value="ECO:0000318"/>
    <property type="project" value="GO_Central"/>
</dbReference>
<dbReference type="GO" id="GO:0005109">
    <property type="term" value="F:frizzled binding"/>
    <property type="evidence" value="ECO:0000318"/>
    <property type="project" value="GO_Central"/>
</dbReference>
<dbReference type="GO" id="GO:0048513">
    <property type="term" value="P:animal organ development"/>
    <property type="evidence" value="ECO:0007669"/>
    <property type="project" value="UniProtKB-ARBA"/>
</dbReference>
<dbReference type="GO" id="GO:0060070">
    <property type="term" value="P:canonical Wnt signaling pathway"/>
    <property type="evidence" value="ECO:0000318"/>
    <property type="project" value="GO_Central"/>
</dbReference>
<dbReference type="GO" id="GO:0045165">
    <property type="term" value="P:cell fate commitment"/>
    <property type="evidence" value="ECO:0000318"/>
    <property type="project" value="GO_Central"/>
</dbReference>
<dbReference type="GO" id="GO:0030182">
    <property type="term" value="P:neuron differentiation"/>
    <property type="evidence" value="ECO:0000318"/>
    <property type="project" value="GO_Central"/>
</dbReference>
<dbReference type="CDD" id="cd19346">
    <property type="entry name" value="Wnt_Wnt2b"/>
    <property type="match status" value="1"/>
</dbReference>
<dbReference type="FunFam" id="3.30.2460.20:FF:000001">
    <property type="entry name" value="Wnt homolog"/>
    <property type="match status" value="1"/>
</dbReference>
<dbReference type="Gene3D" id="3.30.2460.20">
    <property type="match status" value="1"/>
</dbReference>
<dbReference type="InterPro" id="IPR005817">
    <property type="entry name" value="Wnt"/>
</dbReference>
<dbReference type="InterPro" id="IPR009140">
    <property type="entry name" value="Wnt2"/>
</dbReference>
<dbReference type="InterPro" id="IPR043158">
    <property type="entry name" value="Wnt_C"/>
</dbReference>
<dbReference type="InterPro" id="IPR018161">
    <property type="entry name" value="Wnt_CS"/>
</dbReference>
<dbReference type="PANTHER" id="PTHR12027:SF93">
    <property type="entry name" value="PROTEIN WNT-2B"/>
    <property type="match status" value="1"/>
</dbReference>
<dbReference type="PANTHER" id="PTHR12027">
    <property type="entry name" value="WNT RELATED"/>
    <property type="match status" value="1"/>
</dbReference>
<dbReference type="Pfam" id="PF00110">
    <property type="entry name" value="wnt"/>
    <property type="match status" value="1"/>
</dbReference>
<dbReference type="PRINTS" id="PR01842">
    <property type="entry name" value="WNT2PROTEIN"/>
</dbReference>
<dbReference type="PRINTS" id="PR01349">
    <property type="entry name" value="WNTPROTEIN"/>
</dbReference>
<dbReference type="SMART" id="SM00097">
    <property type="entry name" value="WNT1"/>
    <property type="match status" value="1"/>
</dbReference>
<dbReference type="PROSITE" id="PS00246">
    <property type="entry name" value="WNT1"/>
    <property type="match status" value="1"/>
</dbReference>
<gene>
    <name type="primary">wnt2b-a</name>
</gene>
<reference key="1">
    <citation type="journal article" date="1997" name="Mech. Dev.">
        <title>Xwnt-2b is a novel axis-inducing Xenopus Wnt, which is expressed in embryonic brain.</title>
        <authorList>
            <person name="Landesman Y."/>
            <person name="Sokol S.Y."/>
        </authorList>
    </citation>
    <scope>NUCLEOTIDE SEQUENCE [MRNA]</scope>
    <scope>FUNCTION</scope>
    <scope>TISSUE SPECIFICITY</scope>
    <source>
        <tissue>Ovary</tissue>
    </source>
</reference>
<reference key="2">
    <citation type="journal article" date="2002" name="Biochim. Biophys. Acta">
        <title>Xwnt-2 (Xwnt-2b) is maternally expressed in Xenopus oocytes and embryos.</title>
        <authorList>
            <person name="Landesman Y."/>
            <person name="Goodenough D.A."/>
            <person name="Paul D.L."/>
        </authorList>
    </citation>
    <scope>TISSUE SPECIFICITY</scope>
    <scope>DEVELOPMENTAL STAGE</scope>
</reference>
<accession>P87387</accession>
<sequence>MHFAYILILLILTPRVDSSWWYIGALGARVICDNIPGLVNKQRQLCQKHPDIMQAIGEGAKEWIRECQHQFRHHRWNCSTLDRDHTVFGRVMLRSSRETAFVYAISYAGVVYAITRACSQGELKSCNCDPKKRGRSKDERGEFDWGGCSDHIDFGIKFPKDFVDAKEKRLKDARALMNLHNNRCGRMAVKRFMNLECKCHGVSGSCTLRTCWRAMSDFRKTGDFLRRRYNGAIQVTMNQDGSGFAVANQNFRKATKKDLVYFENSPDYCVMDKTAGSLGTAGRVCDKVSRGTDGCEVMCCGRGYDTTRVTRITKCECKFHWCCAVRCKECEETVDVHTCKAPKRAEWLDQT</sequence>
<name>WN2BA_XENLA</name>